<evidence type="ECO:0000250" key="1"/>
<evidence type="ECO:0000255" key="2">
    <source>
        <dbReference type="PROSITE-ProRule" id="PRU01330"/>
    </source>
</evidence>
<evidence type="ECO:0000255" key="3">
    <source>
        <dbReference type="PROSITE-ProRule" id="PRU01331"/>
    </source>
</evidence>
<evidence type="ECO:0000305" key="4"/>
<dbReference type="EC" id="6.3.1.2"/>
<dbReference type="EMBL" id="X69087">
    <property type="protein sequence ID" value="CAA48830.1"/>
    <property type="molecule type" value="mRNA"/>
</dbReference>
<dbReference type="SMR" id="Q06378"/>
<dbReference type="SABIO-RK" id="Q06378"/>
<dbReference type="ExpressionAtlas" id="Q06378">
    <property type="expression patterns" value="baseline and differential"/>
</dbReference>
<dbReference type="GO" id="GO:0005737">
    <property type="term" value="C:cytoplasm"/>
    <property type="evidence" value="ECO:0007669"/>
    <property type="project" value="UniProtKB-SubCell"/>
</dbReference>
<dbReference type="GO" id="GO:0005524">
    <property type="term" value="F:ATP binding"/>
    <property type="evidence" value="ECO:0007669"/>
    <property type="project" value="UniProtKB-KW"/>
</dbReference>
<dbReference type="GO" id="GO:0004356">
    <property type="term" value="F:glutamine synthetase activity"/>
    <property type="evidence" value="ECO:0007669"/>
    <property type="project" value="UniProtKB-EC"/>
</dbReference>
<dbReference type="GO" id="GO:0006542">
    <property type="term" value="P:glutamine biosynthetic process"/>
    <property type="evidence" value="ECO:0007669"/>
    <property type="project" value="InterPro"/>
</dbReference>
<dbReference type="FunFam" id="3.30.590.10:FF:000004">
    <property type="entry name" value="Glutamine synthetase"/>
    <property type="match status" value="1"/>
</dbReference>
<dbReference type="FunFam" id="3.10.20.70:FF:000003">
    <property type="entry name" value="Glutamine synthetase, chloroplastic"/>
    <property type="match status" value="1"/>
</dbReference>
<dbReference type="Gene3D" id="3.10.20.70">
    <property type="entry name" value="Glutamine synthetase, N-terminal domain"/>
    <property type="match status" value="1"/>
</dbReference>
<dbReference type="Gene3D" id="3.30.590.10">
    <property type="entry name" value="Glutamine synthetase/guanido kinase, catalytic domain"/>
    <property type="match status" value="1"/>
</dbReference>
<dbReference type="InterPro" id="IPR008147">
    <property type="entry name" value="Gln_synt_N"/>
</dbReference>
<dbReference type="InterPro" id="IPR036651">
    <property type="entry name" value="Gln_synt_N_sf"/>
</dbReference>
<dbReference type="InterPro" id="IPR014746">
    <property type="entry name" value="Gln_synth/guanido_kin_cat_dom"/>
</dbReference>
<dbReference type="InterPro" id="IPR008146">
    <property type="entry name" value="Gln_synth_cat_dom"/>
</dbReference>
<dbReference type="InterPro" id="IPR027303">
    <property type="entry name" value="Gln_synth_gly_rich_site"/>
</dbReference>
<dbReference type="InterPro" id="IPR027302">
    <property type="entry name" value="Gln_synth_N_conserv_site"/>
</dbReference>
<dbReference type="InterPro" id="IPR050292">
    <property type="entry name" value="Glutamine_Synthetase"/>
</dbReference>
<dbReference type="PANTHER" id="PTHR20852">
    <property type="entry name" value="GLUTAMINE SYNTHETASE"/>
    <property type="match status" value="1"/>
</dbReference>
<dbReference type="PANTHER" id="PTHR20852:SF93">
    <property type="entry name" value="GLUTAMINE SYNTHETASE CYTOSOLIC ISOZYME 1-1"/>
    <property type="match status" value="1"/>
</dbReference>
<dbReference type="Pfam" id="PF00120">
    <property type="entry name" value="Gln-synt_C"/>
    <property type="match status" value="1"/>
</dbReference>
<dbReference type="Pfam" id="PF03951">
    <property type="entry name" value="Gln-synt_N"/>
    <property type="match status" value="1"/>
</dbReference>
<dbReference type="SMART" id="SM01230">
    <property type="entry name" value="Gln-synt_C"/>
    <property type="match status" value="1"/>
</dbReference>
<dbReference type="SUPFAM" id="SSF54368">
    <property type="entry name" value="Glutamine synthetase, N-terminal domain"/>
    <property type="match status" value="1"/>
</dbReference>
<dbReference type="SUPFAM" id="SSF55931">
    <property type="entry name" value="Glutamine synthetase/guanido kinase"/>
    <property type="match status" value="1"/>
</dbReference>
<dbReference type="PROSITE" id="PS00180">
    <property type="entry name" value="GLNA_1"/>
    <property type="match status" value="1"/>
</dbReference>
<dbReference type="PROSITE" id="PS00181">
    <property type="entry name" value="GLNA_ATP"/>
    <property type="match status" value="1"/>
</dbReference>
<dbReference type="PROSITE" id="PS51986">
    <property type="entry name" value="GS_BETA_GRASP"/>
    <property type="match status" value="1"/>
</dbReference>
<dbReference type="PROSITE" id="PS51987">
    <property type="entry name" value="GS_CATALYTIC"/>
    <property type="match status" value="1"/>
</dbReference>
<name>GLNA3_HORVU</name>
<reference key="1">
    <citation type="journal article" date="1993" name="Hereditas">
        <title>Isolation and characterization of a cDNA coding for cytoplasmic glutamine synthetase of barley.</title>
        <authorList>
            <person name="Marigo C."/>
            <person name="Zito F."/>
            <person name="Casadoro G."/>
        </authorList>
    </citation>
    <scope>NUCLEOTIDE SEQUENCE [MRNA]</scope>
</reference>
<protein>
    <recommendedName>
        <fullName>Glutamine synthetase</fullName>
        <ecNumber>6.3.1.2</ecNumber>
    </recommendedName>
    <alternativeName>
        <fullName>Cytoplasmic GS3</fullName>
    </alternativeName>
    <alternativeName>
        <fullName>Glutamate--ammonia ligase</fullName>
    </alternativeName>
</protein>
<organism>
    <name type="scientific">Hordeum vulgare</name>
    <name type="common">Barley</name>
    <dbReference type="NCBI Taxonomy" id="4513"/>
    <lineage>
        <taxon>Eukaryota</taxon>
        <taxon>Viridiplantae</taxon>
        <taxon>Streptophyta</taxon>
        <taxon>Embryophyta</taxon>
        <taxon>Tracheophyta</taxon>
        <taxon>Spermatophyta</taxon>
        <taxon>Magnoliopsida</taxon>
        <taxon>Liliopsida</taxon>
        <taxon>Poales</taxon>
        <taxon>Poaceae</taxon>
        <taxon>BOP clade</taxon>
        <taxon>Pooideae</taxon>
        <taxon>Triticodae</taxon>
        <taxon>Triticeae</taxon>
        <taxon>Hordeinae</taxon>
        <taxon>Hordeum</taxon>
    </lineage>
</organism>
<proteinExistence type="evidence at transcript level"/>
<keyword id="KW-0067">ATP-binding</keyword>
<keyword id="KW-0963">Cytoplasm</keyword>
<keyword id="KW-0436">Ligase</keyword>
<keyword id="KW-0547">Nucleotide-binding</keyword>
<feature type="chain" id="PRO_0000153173" description="Glutamine synthetase">
    <location>
        <begin position="1"/>
        <end position="356"/>
    </location>
</feature>
<feature type="domain" description="GS beta-grasp" evidence="2">
    <location>
        <begin position="19"/>
        <end position="99"/>
    </location>
</feature>
<feature type="domain" description="GS catalytic" evidence="3">
    <location>
        <begin position="106"/>
        <end position="356"/>
    </location>
</feature>
<comment type="catalytic activity">
    <reaction>
        <text>L-glutamate + NH4(+) + ATP = L-glutamine + ADP + phosphate + H(+)</text>
        <dbReference type="Rhea" id="RHEA:16169"/>
        <dbReference type="ChEBI" id="CHEBI:15378"/>
        <dbReference type="ChEBI" id="CHEBI:28938"/>
        <dbReference type="ChEBI" id="CHEBI:29985"/>
        <dbReference type="ChEBI" id="CHEBI:30616"/>
        <dbReference type="ChEBI" id="CHEBI:43474"/>
        <dbReference type="ChEBI" id="CHEBI:58359"/>
        <dbReference type="ChEBI" id="CHEBI:456216"/>
        <dbReference type="EC" id="6.3.1.2"/>
    </reaction>
</comment>
<comment type="subunit">
    <text evidence="1">Homooctamer.</text>
</comment>
<comment type="subcellular location">
    <subcellularLocation>
        <location>Cytoplasm</location>
    </subcellularLocation>
</comment>
<comment type="miscellaneous">
    <text>In barley, there are distinct isozymes in the chloroplast, and cytoplasm.</text>
</comment>
<comment type="similarity">
    <text evidence="4">Belongs to the glutamine synthetase family.</text>
</comment>
<sequence>MALLTDLLNLDLSGSTEKIIAEYIWIGGSGMDLRSKARHLPGPVTHPSKLPKWNYDGSSTGQAPGEDSEVILYPQAILKDPFREGNNILVMCDCYTPRGEPIPTNKRYNAAKILSNPDVAKEEPWYGIEQEYTLLQKDINWPLGWPVGGFPGPQGPYYCGIGADKSFGRDIVDSHYKACLFGGVNISGINGEVMPGQWEFQVGPTVGISAGDQVWVARYILERITEIAGVVVTFDPKPIPGDWNGAGAHTNYSTESMRNDGGFKVIVDAVEKLKLKHKEHIAAYGEGNERRLTGKHETADINTSSWGVANRGASVRVGRETEQNGKGYFEDRRPASNMDPYVVTSMIAQTTILWKP</sequence>
<accession>Q06378</accession>